<accession>P01298</accession>
<reference key="1">
    <citation type="journal article" date="1984" name="EMBO J.">
        <title>A cDNA encoding a small common precursor for human pancreatic polypeptide and pancreatic icosapeptide.</title>
        <authorList>
            <person name="Boel E."/>
            <person name="Schwartz T.W."/>
            <person name="Norris K.E."/>
            <person name="Fiil N.P."/>
        </authorList>
    </citation>
    <scope>NUCLEOTIDE SEQUENCE [MRNA] (ISOFORM 1)</scope>
    <scope>PROTEOLYTIC PROCESSING</scope>
    <source>
        <tissue>Pancreas</tissue>
    </source>
</reference>
<reference key="2">
    <citation type="journal article" date="1984" name="J. Biol. Chem.">
        <title>Structure of a precursor to human pancreatic polypeptide.</title>
        <authorList>
            <person name="Leiter A.B."/>
            <person name="Keutmann H.T."/>
            <person name="Goodman R.H."/>
        </authorList>
    </citation>
    <scope>NUCLEOTIDE SEQUENCE [MRNA] (ISOFORM 1)</scope>
    <source>
        <tissue>Pancreatic tumor</tissue>
    </source>
</reference>
<reference key="3">
    <citation type="journal article" date="1985" name="J. Biol. Chem.">
        <title>Exons of the human pancreatic polypeptide gene define functional domains of the precursor.</title>
        <authorList>
            <person name="Leiter A.B."/>
            <person name="Montminy M.R."/>
            <person name="Jamieson E."/>
            <person name="Goodman R.H."/>
        </authorList>
    </citation>
    <scope>NUCLEOTIDE SEQUENCE [GENOMIC DNA] (ISOFORM 1)</scope>
</reference>
<reference key="4">
    <citation type="journal article" date="1986" name="J. Clin. Invest.">
        <title>Genes encoding pancreatic polypeptide and neuropeptide Y are on human chromosomes 17 and 7.</title>
        <authorList>
            <person name="Takeuchi T."/>
            <person name="Gumucio D.L."/>
            <person name="Yamada T."/>
            <person name="Meisler M.H."/>
            <person name="Minth C.D."/>
            <person name="Dixon J.E."/>
            <person name="Eddy R.E."/>
            <person name="Shows T.B."/>
        </authorList>
    </citation>
    <scope>NUCLEOTIDE SEQUENCE [MRNA] (ISOFORM 1)</scope>
</reference>
<reference key="5">
    <citation type="journal article" date="2006" name="Nature">
        <title>DNA sequence of human chromosome 17 and analysis of rearrangement in the human lineage.</title>
        <authorList>
            <person name="Zody M.C."/>
            <person name="Garber M."/>
            <person name="Adams D.J."/>
            <person name="Sharpe T."/>
            <person name="Harrow J."/>
            <person name="Lupski J.R."/>
            <person name="Nicholson C."/>
            <person name="Searle S.M."/>
            <person name="Wilming L."/>
            <person name="Young S.K."/>
            <person name="Abouelleil A."/>
            <person name="Allen N.R."/>
            <person name="Bi W."/>
            <person name="Bloom T."/>
            <person name="Borowsky M.L."/>
            <person name="Bugalter B.E."/>
            <person name="Butler J."/>
            <person name="Chang J.L."/>
            <person name="Chen C.-K."/>
            <person name="Cook A."/>
            <person name="Corum B."/>
            <person name="Cuomo C.A."/>
            <person name="de Jong P.J."/>
            <person name="DeCaprio D."/>
            <person name="Dewar K."/>
            <person name="FitzGerald M."/>
            <person name="Gilbert J."/>
            <person name="Gibson R."/>
            <person name="Gnerre S."/>
            <person name="Goldstein S."/>
            <person name="Grafham D.V."/>
            <person name="Grocock R."/>
            <person name="Hafez N."/>
            <person name="Hagopian D.S."/>
            <person name="Hart E."/>
            <person name="Norman C.H."/>
            <person name="Humphray S."/>
            <person name="Jaffe D.B."/>
            <person name="Jones M."/>
            <person name="Kamal M."/>
            <person name="Khodiyar V.K."/>
            <person name="LaButti K."/>
            <person name="Laird G."/>
            <person name="Lehoczky J."/>
            <person name="Liu X."/>
            <person name="Lokyitsang T."/>
            <person name="Loveland J."/>
            <person name="Lui A."/>
            <person name="Macdonald P."/>
            <person name="Major J.E."/>
            <person name="Matthews L."/>
            <person name="Mauceli E."/>
            <person name="McCarroll S.A."/>
            <person name="Mihalev A.H."/>
            <person name="Mudge J."/>
            <person name="Nguyen C."/>
            <person name="Nicol R."/>
            <person name="O'Leary S.B."/>
            <person name="Osoegawa K."/>
            <person name="Schwartz D.C."/>
            <person name="Shaw-Smith C."/>
            <person name="Stankiewicz P."/>
            <person name="Steward C."/>
            <person name="Swarbreck D."/>
            <person name="Venkataraman V."/>
            <person name="Whittaker C.A."/>
            <person name="Yang X."/>
            <person name="Zimmer A.R."/>
            <person name="Bradley A."/>
            <person name="Hubbard T."/>
            <person name="Birren B.W."/>
            <person name="Rogers J."/>
            <person name="Lander E.S."/>
            <person name="Nusbaum C."/>
        </authorList>
    </citation>
    <scope>NUCLEOTIDE SEQUENCE [LARGE SCALE GENOMIC DNA]</scope>
</reference>
<reference key="6">
    <citation type="journal article" date="2004" name="Genome Res.">
        <title>The status, quality, and expansion of the NIH full-length cDNA project: the Mammalian Gene Collection (MGC).</title>
        <authorList>
            <consortium name="The MGC Project Team"/>
        </authorList>
    </citation>
    <scope>NUCLEOTIDE SEQUENCE [LARGE SCALE MRNA] (ISOFORM 1)</scope>
    <source>
        <tissue>Pancreas</tissue>
        <tissue>Spleen</tissue>
    </source>
</reference>
<reference key="7">
    <citation type="journal article" date="2003" name="J. Mol. Endocrinol.">
        <title>Expression profile of mRNAs from human pancreatic islet tumors.</title>
        <authorList>
            <person name="Jin L."/>
            <person name="Wang H."/>
            <person name="Narita T."/>
            <person name="Kikuno R."/>
            <person name="Ohara O."/>
            <person name="Shihara N."/>
            <person name="Nishigori T."/>
            <person name="Horikawa Y."/>
            <person name="Takeda J."/>
        </authorList>
    </citation>
    <scope>NUCLEOTIDE SEQUENCE [LARGE SCALE MRNA] OF 48-95 (ISOFORM 2)</scope>
</reference>
<reference key="8">
    <citation type="journal article" date="1984" name="Proc. Natl. Acad. Sci. U.S.A.">
        <title>Human pancreatic icosapeptide: isolation, sequence, and immunocytochemical localization of the COOH-terminal fragment of the pancreatic polypeptide precursor.</title>
        <authorList>
            <person name="Schwartz T.W."/>
            <person name="Hansen H.F."/>
            <person name="Haakanson R."/>
            <person name="Sundler F."/>
            <person name="Tager H.S."/>
        </authorList>
    </citation>
    <scope>PROTEIN SEQUENCE OF 69-88</scope>
</reference>
<reference key="9">
    <citation type="journal article" date="1976" name="Gut">
        <title>Distribution and release of human pancreatic polypeptide.</title>
        <authorList>
            <person name="Adrian T.E."/>
            <person name="Bloom S.R."/>
            <person name="Bryant M.G."/>
            <person name="Polak J.M."/>
            <person name="Heitz P.H."/>
            <person name="Barnes A.J."/>
        </authorList>
    </citation>
    <scope>SUBCELLULAR LOCATION</scope>
    <scope>INDUCTION</scope>
</reference>
<reference key="10">
    <citation type="journal article" date="1979" name="Metabolism">
        <title>Effect of endurance exercise training on plasma pancreatic polypeptide concentration during exercise.</title>
        <authorList>
            <person name="Gingerich R.L."/>
            <person name="Hickson R.C."/>
            <person name="Hagberg J.M."/>
            <person name="Winder W.W."/>
        </authorList>
    </citation>
    <scope>INDUCTION</scope>
</reference>
<reference key="11">
    <citation type="journal article" date="1995" name="J. Biol. Chem.">
        <title>Cloning and functional expression of a human Y4 subtype receptor for pancreatic polypeptide, neuropeptide Y, and peptide YY.</title>
        <authorList>
            <person name="Bard J.A."/>
            <person name="Walker M.W."/>
            <person name="Branchek T.A."/>
            <person name="Weinshank R.L."/>
        </authorList>
    </citation>
    <scope>FUNCTION</scope>
    <scope>SUBCELLULAR LOCATION</scope>
    <source>
        <tissue>Placenta</tissue>
    </source>
</reference>
<reference key="12">
    <citation type="journal article" date="1995" name="J. Biol. Chem.">
        <title>Cloning of a human receptor of the NPY receptor family with high affinity for pancreatic polypeptide and peptide YY.</title>
        <authorList>
            <person name="Lundell I."/>
            <person name="Blomqvist A.G."/>
            <person name="Berglund M.M."/>
            <person name="Schober D.A."/>
            <person name="Johnson D."/>
            <person name="Statnick M.A."/>
            <person name="Gadski R.A."/>
            <person name="Gehlert D.R."/>
            <person name="Larhammar D."/>
        </authorList>
    </citation>
    <scope>FUNCTION</scope>
    <scope>SUBCELLULAR LOCATION</scope>
</reference>
<reference key="13">
    <citation type="journal article" date="2014" name="Drug Discov. Today">
        <title>Treating obesity: is it all in the gut?</title>
        <authorList>
            <person name="Davenport R.J."/>
            <person name="Wright S."/>
        </authorList>
    </citation>
    <scope>NOMENCLATURE</scope>
    <scope>PHARMACEUTICAL</scope>
</reference>
<reference key="14">
    <citation type="journal article" date="2005" name="Biochemistry">
        <title>Strongly altered receptor binding properties in PP and NPY chimeras are accompanied by changes in structure and membrane binding.</title>
        <authorList>
            <person name="Lerch M."/>
            <person name="Kamimori H."/>
            <person name="Folkers G."/>
            <person name="Aguilar M.-I."/>
            <person name="Beck-Sickinger A.G."/>
            <person name="Zerbe O."/>
        </authorList>
    </citation>
    <scope>STRUCTURE BY NMR OF 30-54</scope>
</reference>
<dbReference type="EMBL" id="X00491">
    <property type="protein sequence ID" value="CAA25161.1"/>
    <property type="molecule type" value="mRNA"/>
</dbReference>
<dbReference type="EMBL" id="M11726">
    <property type="protein sequence ID" value="AAA60156.1"/>
    <property type="molecule type" value="Genomic_DNA"/>
</dbReference>
<dbReference type="EMBL" id="M15788">
    <property type="protein sequence ID" value="AAA60161.1"/>
    <property type="molecule type" value="mRNA"/>
</dbReference>
<dbReference type="EMBL" id="AC007993">
    <property type="status" value="NOT_ANNOTATED_CDS"/>
    <property type="molecule type" value="Genomic_DNA"/>
</dbReference>
<dbReference type="EMBL" id="BC032225">
    <property type="protein sequence ID" value="AAH32225.1"/>
    <property type="molecule type" value="mRNA"/>
</dbReference>
<dbReference type="EMBL" id="BC040033">
    <property type="protein sequence ID" value="AAH40033.1"/>
    <property type="molecule type" value="mRNA"/>
</dbReference>
<dbReference type="EMBL" id="BP385720">
    <property type="status" value="NOT_ANNOTATED_CDS"/>
    <property type="molecule type" value="mRNA"/>
</dbReference>
<dbReference type="CCDS" id="CCDS11472.1">
    <molecule id="P01298-1"/>
</dbReference>
<dbReference type="PIR" id="A92498">
    <property type="entry name" value="PCHU"/>
</dbReference>
<dbReference type="RefSeq" id="NP_002713.1">
    <molecule id="P01298-1"/>
    <property type="nucleotide sequence ID" value="NM_002722.5"/>
</dbReference>
<dbReference type="PDB" id="1TZ4">
    <property type="method" value="NMR"/>
    <property type="chains" value="A=48-52"/>
</dbReference>
<dbReference type="PDB" id="1TZ5">
    <property type="method" value="NMR"/>
    <property type="chains" value="A=30-47, A=53-65"/>
</dbReference>
<dbReference type="PDB" id="7X9C">
    <property type="method" value="EM"/>
    <property type="resolution" value="3.00 A"/>
    <property type="chains" value="P=30-65"/>
</dbReference>
<dbReference type="PDBsum" id="1TZ4"/>
<dbReference type="PDBsum" id="1TZ5"/>
<dbReference type="PDBsum" id="7X9C"/>
<dbReference type="SMR" id="P01298"/>
<dbReference type="BioGRID" id="111531">
    <property type="interactions" value="13"/>
</dbReference>
<dbReference type="FunCoup" id="P01298">
    <property type="interactions" value="470"/>
</dbReference>
<dbReference type="IntAct" id="P01298">
    <property type="interactions" value="9"/>
</dbReference>
<dbReference type="STRING" id="9606.ENSP00000466009"/>
<dbReference type="SwissPalm" id="P01298"/>
<dbReference type="BioMuta" id="PPY"/>
<dbReference type="MassIVE" id="P01298"/>
<dbReference type="PaxDb" id="9606-ENSP00000466009"/>
<dbReference type="PeptideAtlas" id="P01298"/>
<dbReference type="ProteomicsDB" id="51372"/>
<dbReference type="ABCD" id="P01298">
    <property type="antibodies" value="1 sequenced antibody"/>
</dbReference>
<dbReference type="Antibodypedia" id="29637">
    <property type="antibodies" value="416 antibodies from 35 providers"/>
</dbReference>
<dbReference type="DNASU" id="5539"/>
<dbReference type="Ensembl" id="ENST00000225992.8">
    <molecule id="P01298-1"/>
    <property type="protein sequence ID" value="ENSP00000225992.3"/>
    <property type="gene ID" value="ENSG00000108849.8"/>
</dbReference>
<dbReference type="Ensembl" id="ENST00000591228.4">
    <molecule id="P01298-1"/>
    <property type="protein sequence ID" value="ENSP00000466009.1"/>
    <property type="gene ID" value="ENSG00000108849.8"/>
</dbReference>
<dbReference type="GeneID" id="5539"/>
<dbReference type="KEGG" id="hsa:5539"/>
<dbReference type="MANE-Select" id="ENST00000225992.8">
    <property type="protein sequence ID" value="ENSP00000225992.3"/>
    <property type="RefSeq nucleotide sequence ID" value="NM_002722.5"/>
    <property type="RefSeq protein sequence ID" value="NP_002713.1"/>
</dbReference>
<dbReference type="UCSC" id="uc002iep.4">
    <molecule id="P01298-1"/>
    <property type="organism name" value="human"/>
</dbReference>
<dbReference type="AGR" id="HGNC:9327"/>
<dbReference type="CTD" id="5539"/>
<dbReference type="DisGeNET" id="5539"/>
<dbReference type="GeneCards" id="PPY"/>
<dbReference type="HGNC" id="HGNC:9327">
    <property type="gene designation" value="PPY"/>
</dbReference>
<dbReference type="HPA" id="ENSG00000108849">
    <property type="expression patterns" value="Tissue enriched (pancreas)"/>
</dbReference>
<dbReference type="MIM" id="167780">
    <property type="type" value="gene"/>
</dbReference>
<dbReference type="neXtProt" id="NX_P01298"/>
<dbReference type="OpenTargets" id="ENSG00000108849"/>
<dbReference type="PharmGKB" id="PA33690"/>
<dbReference type="VEuPathDB" id="HostDB:ENSG00000108849"/>
<dbReference type="eggNOG" id="ENOG502TD4B">
    <property type="taxonomic scope" value="Eukaryota"/>
</dbReference>
<dbReference type="GeneTree" id="ENSGT00530000064295"/>
<dbReference type="InParanoid" id="P01298"/>
<dbReference type="OMA" id="MAATRRC"/>
<dbReference type="OrthoDB" id="9901897at2759"/>
<dbReference type="PAN-GO" id="P01298">
    <property type="GO annotations" value="5 GO annotations based on evolutionary models"/>
</dbReference>
<dbReference type="PhylomeDB" id="P01298"/>
<dbReference type="TreeFam" id="TF332778"/>
<dbReference type="PathwayCommons" id="P01298"/>
<dbReference type="Reactome" id="R-HSA-375276">
    <property type="pathway name" value="Peptide ligand-binding receptors"/>
</dbReference>
<dbReference type="Reactome" id="R-HSA-418594">
    <property type="pathway name" value="G alpha (i) signalling events"/>
</dbReference>
<dbReference type="SignaLink" id="P01298"/>
<dbReference type="SIGNOR" id="P01298"/>
<dbReference type="BioGRID-ORCS" id="5539">
    <property type="hits" value="292 hits in 1147 CRISPR screens"/>
</dbReference>
<dbReference type="ChiTaRS" id="PPY">
    <property type="organism name" value="human"/>
</dbReference>
<dbReference type="EvolutionaryTrace" id="P01298"/>
<dbReference type="GenomeRNAi" id="5539"/>
<dbReference type="Pharos" id="P01298">
    <property type="development level" value="Tbio"/>
</dbReference>
<dbReference type="PRO" id="PR:P01298"/>
<dbReference type="Proteomes" id="UP000005640">
    <property type="component" value="Chromosome 17"/>
</dbReference>
<dbReference type="RNAct" id="P01298">
    <property type="molecule type" value="protein"/>
</dbReference>
<dbReference type="Bgee" id="ENSG00000108849">
    <property type="expression patterns" value="Expressed in type B pancreatic cell and 72 other cell types or tissues"/>
</dbReference>
<dbReference type="ExpressionAtlas" id="P01298">
    <property type="expression patterns" value="baseline and differential"/>
</dbReference>
<dbReference type="GO" id="GO:0005737">
    <property type="term" value="C:cytoplasm"/>
    <property type="evidence" value="ECO:0007669"/>
    <property type="project" value="Ensembl"/>
</dbReference>
<dbReference type="GO" id="GO:0005576">
    <property type="term" value="C:extracellular region"/>
    <property type="evidence" value="ECO:0000304"/>
    <property type="project" value="Reactome"/>
</dbReference>
<dbReference type="GO" id="GO:0005615">
    <property type="term" value="C:extracellular space"/>
    <property type="evidence" value="ECO:0000318"/>
    <property type="project" value="GO_Central"/>
</dbReference>
<dbReference type="GO" id="GO:0001664">
    <property type="term" value="F:G protein-coupled receptor binding"/>
    <property type="evidence" value="ECO:0000353"/>
    <property type="project" value="GO_Central"/>
</dbReference>
<dbReference type="GO" id="GO:0005179">
    <property type="term" value="F:hormone activity"/>
    <property type="evidence" value="ECO:0000304"/>
    <property type="project" value="ProtInc"/>
</dbReference>
<dbReference type="GO" id="GO:0005184">
    <property type="term" value="F:neuropeptide hormone activity"/>
    <property type="evidence" value="ECO:0000318"/>
    <property type="project" value="GO_Central"/>
</dbReference>
<dbReference type="GO" id="GO:0031841">
    <property type="term" value="F:neuropeptide Y receptor binding"/>
    <property type="evidence" value="ECO:0000318"/>
    <property type="project" value="GO_Central"/>
</dbReference>
<dbReference type="GO" id="GO:0007631">
    <property type="term" value="P:feeding behavior"/>
    <property type="evidence" value="ECO:0000318"/>
    <property type="project" value="GO_Central"/>
</dbReference>
<dbReference type="GO" id="GO:0007218">
    <property type="term" value="P:neuropeptide signaling pathway"/>
    <property type="evidence" value="ECO:0000318"/>
    <property type="project" value="GO_Central"/>
</dbReference>
<dbReference type="GO" id="GO:0009306">
    <property type="term" value="P:protein secretion"/>
    <property type="evidence" value="ECO:0000304"/>
    <property type="project" value="ProtInc"/>
</dbReference>
<dbReference type="CDD" id="cd00126">
    <property type="entry name" value="PAH"/>
    <property type="match status" value="1"/>
</dbReference>
<dbReference type="Gene3D" id="6.10.250.900">
    <property type="match status" value="1"/>
</dbReference>
<dbReference type="InterPro" id="IPR001955">
    <property type="entry name" value="Pancreatic_hormone-like"/>
</dbReference>
<dbReference type="InterPro" id="IPR020392">
    <property type="entry name" value="Pancreatic_hormone-like_CS"/>
</dbReference>
<dbReference type="PANTHER" id="PTHR10533">
    <property type="entry name" value="NEUROPEPTIDE Y/PANCREATIC HORMONE/PEPTIDE YY"/>
    <property type="match status" value="1"/>
</dbReference>
<dbReference type="PANTHER" id="PTHR10533:SF2">
    <property type="entry name" value="PANCREATIC POLYPEPTIDE PROHORMONE"/>
    <property type="match status" value="1"/>
</dbReference>
<dbReference type="Pfam" id="PF00159">
    <property type="entry name" value="Hormone_3"/>
    <property type="match status" value="1"/>
</dbReference>
<dbReference type="PRINTS" id="PR00278">
    <property type="entry name" value="PANCHORMONE"/>
</dbReference>
<dbReference type="SMART" id="SM00309">
    <property type="entry name" value="PAH"/>
    <property type="match status" value="1"/>
</dbReference>
<dbReference type="PROSITE" id="PS00265">
    <property type="entry name" value="PANCREATIC_HORMONE_1"/>
    <property type="match status" value="1"/>
</dbReference>
<dbReference type="PROSITE" id="PS50276">
    <property type="entry name" value="PANCREATIC_HORMONE_2"/>
    <property type="match status" value="1"/>
</dbReference>
<comment type="function">
    <molecule>Pancreatic polypeptide</molecule>
    <text evidence="3 4">Hormone secreted by pancreatic cells that acts as a regulator of pancreatic and gastrointestinal functions probably by signaling through the G protein-coupled receptor NPY4R2.</text>
</comment>
<comment type="interaction">
    <interactant intactId="EBI-12121422">
        <id>P01298</id>
    </interactant>
    <interactant intactId="EBI-3867333">
        <id>A8MQ03</id>
        <label>CYSRT1</label>
    </interactant>
    <organismsDiffer>false</organismsDiffer>
    <experiments>3</experiments>
</comment>
<comment type="subcellular location">
    <subcellularLocation>
        <location evidence="3 4 5">Secreted</location>
    </subcellularLocation>
</comment>
<comment type="alternative products">
    <event type="alternative splicing"/>
    <isoform>
        <id>P01298-1</id>
        <name>1</name>
        <sequence type="displayed"/>
    </isoform>
    <isoform>
        <id>P01298-2</id>
        <name>2</name>
        <sequence type="described" ref="VSP_057852"/>
    </isoform>
</comment>
<comment type="induction">
    <text evidence="2 5">Released in circulation upon food intake (PubMed:828120). Also up-regulated by exercise (PubMed:514078).</text>
</comment>
<comment type="pharmaceutical">
    <text evidence="6">Obinepitide is under clinical trial by 7TM Pharma to be used for the treatment of obesity. Obinepitide is derived from pancreatic hormone residues 30 to 65 with a Gln at position 63.</text>
</comment>
<comment type="similarity">
    <text evidence="9">Belongs to the NPY family.</text>
</comment>
<protein>
    <recommendedName>
        <fullName evidence="9">Pancreatic polypeptide prohormone</fullName>
        <shortName>PH</shortName>
    </recommendedName>
    <alternativeName>
        <fullName evidence="10">Pancreatic polypeptide Y</fullName>
    </alternativeName>
    <innName evidence="6">Obinepitide</innName>
    <component>
        <recommendedName>
            <fullName evidence="7">Pancreatic polypeptide</fullName>
            <shortName evidence="8">HPP</shortName>
            <shortName evidence="7">PP</shortName>
        </recommendedName>
    </component>
    <component>
        <recommendedName>
            <fullName evidence="7">Pancreatic icosapeptide</fullName>
            <shortName>PI</shortName>
        </recommendedName>
    </component>
</protein>
<sequence>MAAARLCLSLLLLSTCVALLLQPLLGAQGAPLEPVYPGDNATPEQMAQYAADLRRYINMLTRPRYGKRHKEDTLAFSEWGSPHAAVPRELSPLDL</sequence>
<feature type="signal peptide">
    <location>
        <begin position="1"/>
        <end position="29"/>
    </location>
</feature>
<feature type="peptide" id="PRO_0000025365" description="Pancreatic polypeptide">
    <location>
        <begin position="30"/>
        <end position="65"/>
    </location>
</feature>
<feature type="peptide" id="PRO_0000025366" description="Pancreatic icosapeptide">
    <location>
        <begin position="69"/>
        <end position="88"/>
    </location>
</feature>
<feature type="propeptide" id="PRO_0000025367">
    <location>
        <begin position="89"/>
        <end position="95"/>
    </location>
</feature>
<feature type="modified residue" description="Tyrosine amide" evidence="1">
    <location>
        <position position="65"/>
    </location>
</feature>
<feature type="splice variant" id="VSP_057852" description="In isoform 2." evidence="9">
    <original>R</original>
    <variation>RPRCVPQLGREIPAPGTLGPLHIPGHTLSPAPAPAPSRPALGKTGHLCSTGLDQCALGKMVPTGRYETGGLAPGHSACPCCLFP</variation>
    <location>
        <position position="62"/>
    </location>
</feature>
<feature type="sequence variant" id="VAR_050615" description="In dbSNP:rs7215698.">
    <original>E</original>
    <variation>G</variation>
    <location>
        <position position="78"/>
    </location>
</feature>
<feature type="sequence conflict" description="In Ref. 4; AAA60161." evidence="9" ref="4">
    <original>V</original>
    <variation>I</variation>
    <location>
        <position position="86"/>
    </location>
</feature>
<feature type="helix" evidence="11">
    <location>
        <begin position="43"/>
        <end position="60"/>
    </location>
</feature>
<name>PAHO_HUMAN</name>
<evidence type="ECO:0000250" key="1"/>
<evidence type="ECO:0000269" key="2">
    <source>
    </source>
</evidence>
<evidence type="ECO:0000269" key="3">
    <source>
    </source>
</evidence>
<evidence type="ECO:0000269" key="4">
    <source>
    </source>
</evidence>
<evidence type="ECO:0000269" key="5">
    <source>
    </source>
</evidence>
<evidence type="ECO:0000303" key="6">
    <source>
    </source>
</evidence>
<evidence type="ECO:0000303" key="7">
    <source>
    </source>
</evidence>
<evidence type="ECO:0000303" key="8">
    <source>
    </source>
</evidence>
<evidence type="ECO:0000305" key="9"/>
<evidence type="ECO:0000312" key="10">
    <source>
        <dbReference type="HGNC" id="HGNC:9327"/>
    </source>
</evidence>
<evidence type="ECO:0007829" key="11">
    <source>
        <dbReference type="PDB" id="7X9C"/>
    </source>
</evidence>
<organism>
    <name type="scientific">Homo sapiens</name>
    <name type="common">Human</name>
    <dbReference type="NCBI Taxonomy" id="9606"/>
    <lineage>
        <taxon>Eukaryota</taxon>
        <taxon>Metazoa</taxon>
        <taxon>Chordata</taxon>
        <taxon>Craniata</taxon>
        <taxon>Vertebrata</taxon>
        <taxon>Euteleostomi</taxon>
        <taxon>Mammalia</taxon>
        <taxon>Eutheria</taxon>
        <taxon>Euarchontoglires</taxon>
        <taxon>Primates</taxon>
        <taxon>Haplorrhini</taxon>
        <taxon>Catarrhini</taxon>
        <taxon>Hominidae</taxon>
        <taxon>Homo</taxon>
    </lineage>
</organism>
<gene>
    <name evidence="10" type="primary">PPY</name>
    <name type="synonym">PNP</name>
</gene>
<proteinExistence type="evidence at protein level"/>
<keyword id="KW-0002">3D-structure</keyword>
<keyword id="KW-0025">Alternative splicing</keyword>
<keyword id="KW-0027">Amidation</keyword>
<keyword id="KW-0165">Cleavage on pair of basic residues</keyword>
<keyword id="KW-0903">Direct protein sequencing</keyword>
<keyword id="KW-0372">Hormone</keyword>
<keyword id="KW-0582">Pharmaceutical</keyword>
<keyword id="KW-1267">Proteomics identification</keyword>
<keyword id="KW-1185">Reference proteome</keyword>
<keyword id="KW-0964">Secreted</keyword>
<keyword id="KW-0732">Signal</keyword>